<feature type="chain" id="PRO_0000293774" description="Small ribosomal subunit protein uS3">
    <location>
        <begin position="1"/>
        <end position="271"/>
    </location>
</feature>
<feature type="domain" description="KH type-2" evidence="1">
    <location>
        <begin position="40"/>
        <end position="108"/>
    </location>
</feature>
<feature type="region of interest" description="Disordered" evidence="2">
    <location>
        <begin position="210"/>
        <end position="271"/>
    </location>
</feature>
<feature type="compositionally biased region" description="Basic and acidic residues" evidence="2">
    <location>
        <begin position="215"/>
        <end position="247"/>
    </location>
</feature>
<organism>
    <name type="scientific">Clostridioides difficile (strain 630)</name>
    <name type="common">Peptoclostridium difficile</name>
    <dbReference type="NCBI Taxonomy" id="272563"/>
    <lineage>
        <taxon>Bacteria</taxon>
        <taxon>Bacillati</taxon>
        <taxon>Bacillota</taxon>
        <taxon>Clostridia</taxon>
        <taxon>Peptostreptococcales</taxon>
        <taxon>Peptostreptococcaceae</taxon>
        <taxon>Clostridioides</taxon>
    </lineage>
</organism>
<protein>
    <recommendedName>
        <fullName evidence="1">Small ribosomal subunit protein uS3</fullName>
    </recommendedName>
    <alternativeName>
        <fullName evidence="3">30S ribosomal protein S3</fullName>
    </alternativeName>
</protein>
<keyword id="KW-1185">Reference proteome</keyword>
<keyword id="KW-0687">Ribonucleoprotein</keyword>
<keyword id="KW-0689">Ribosomal protein</keyword>
<keyword id="KW-0694">RNA-binding</keyword>
<keyword id="KW-0699">rRNA-binding</keyword>
<name>RS3_CLOD6</name>
<reference key="1">
    <citation type="journal article" date="2006" name="Nat. Genet.">
        <title>The multidrug-resistant human pathogen Clostridium difficile has a highly mobile, mosaic genome.</title>
        <authorList>
            <person name="Sebaihia M."/>
            <person name="Wren B.W."/>
            <person name="Mullany P."/>
            <person name="Fairweather N.F."/>
            <person name="Minton N."/>
            <person name="Stabler R."/>
            <person name="Thomson N.R."/>
            <person name="Roberts A.P."/>
            <person name="Cerdeno-Tarraga A.M."/>
            <person name="Wang H."/>
            <person name="Holden M.T.G."/>
            <person name="Wright A."/>
            <person name="Churcher C."/>
            <person name="Quail M.A."/>
            <person name="Baker S."/>
            <person name="Bason N."/>
            <person name="Brooks K."/>
            <person name="Chillingworth T."/>
            <person name="Cronin A."/>
            <person name="Davis P."/>
            <person name="Dowd L."/>
            <person name="Fraser A."/>
            <person name="Feltwell T."/>
            <person name="Hance Z."/>
            <person name="Holroyd S."/>
            <person name="Jagels K."/>
            <person name="Moule S."/>
            <person name="Mungall K."/>
            <person name="Price C."/>
            <person name="Rabbinowitsch E."/>
            <person name="Sharp S."/>
            <person name="Simmonds M."/>
            <person name="Stevens K."/>
            <person name="Unwin L."/>
            <person name="Whithead S."/>
            <person name="Dupuy B."/>
            <person name="Dougan G."/>
            <person name="Barrell B."/>
            <person name="Parkhill J."/>
        </authorList>
    </citation>
    <scope>NUCLEOTIDE SEQUENCE [LARGE SCALE GENOMIC DNA]</scope>
    <source>
        <strain>630</strain>
    </source>
</reference>
<dbReference type="EMBL" id="AM180355">
    <property type="protein sequence ID" value="CAJ66894.1"/>
    <property type="molecule type" value="Genomic_DNA"/>
</dbReference>
<dbReference type="RefSeq" id="WP_003421163.1">
    <property type="nucleotide sequence ID" value="NZ_JAUPES010000043.1"/>
</dbReference>
<dbReference type="RefSeq" id="YP_001086543.1">
    <property type="nucleotide sequence ID" value="NC_009089.1"/>
</dbReference>
<dbReference type="SMR" id="Q18CG5"/>
<dbReference type="STRING" id="272563.CD630_00790"/>
<dbReference type="EnsemblBacteria" id="CAJ66894">
    <property type="protein sequence ID" value="CAJ66894"/>
    <property type="gene ID" value="CD630_00790"/>
</dbReference>
<dbReference type="GeneID" id="66352577"/>
<dbReference type="KEGG" id="cdf:CD630_00790"/>
<dbReference type="KEGG" id="pdc:CDIF630_00145"/>
<dbReference type="PATRIC" id="fig|272563.120.peg.85"/>
<dbReference type="eggNOG" id="COG0092">
    <property type="taxonomic scope" value="Bacteria"/>
</dbReference>
<dbReference type="OrthoDB" id="9806396at2"/>
<dbReference type="PhylomeDB" id="Q18CG5"/>
<dbReference type="BioCyc" id="PDIF272563:G12WB-133-MONOMER"/>
<dbReference type="Proteomes" id="UP000001978">
    <property type="component" value="Chromosome"/>
</dbReference>
<dbReference type="GO" id="GO:0022627">
    <property type="term" value="C:cytosolic small ribosomal subunit"/>
    <property type="evidence" value="ECO:0007669"/>
    <property type="project" value="TreeGrafter"/>
</dbReference>
<dbReference type="GO" id="GO:0003729">
    <property type="term" value="F:mRNA binding"/>
    <property type="evidence" value="ECO:0007669"/>
    <property type="project" value="UniProtKB-UniRule"/>
</dbReference>
<dbReference type="GO" id="GO:0019843">
    <property type="term" value="F:rRNA binding"/>
    <property type="evidence" value="ECO:0007669"/>
    <property type="project" value="UniProtKB-UniRule"/>
</dbReference>
<dbReference type="GO" id="GO:0003735">
    <property type="term" value="F:structural constituent of ribosome"/>
    <property type="evidence" value="ECO:0007669"/>
    <property type="project" value="InterPro"/>
</dbReference>
<dbReference type="GO" id="GO:0006412">
    <property type="term" value="P:translation"/>
    <property type="evidence" value="ECO:0007669"/>
    <property type="project" value="UniProtKB-UniRule"/>
</dbReference>
<dbReference type="CDD" id="cd02412">
    <property type="entry name" value="KH-II_30S_S3"/>
    <property type="match status" value="1"/>
</dbReference>
<dbReference type="FunFam" id="3.30.300.20:FF:000001">
    <property type="entry name" value="30S ribosomal protein S3"/>
    <property type="match status" value="1"/>
</dbReference>
<dbReference type="Gene3D" id="3.30.300.20">
    <property type="match status" value="1"/>
</dbReference>
<dbReference type="Gene3D" id="3.30.1140.32">
    <property type="entry name" value="Ribosomal protein S3, C-terminal domain"/>
    <property type="match status" value="1"/>
</dbReference>
<dbReference type="HAMAP" id="MF_01309_B">
    <property type="entry name" value="Ribosomal_uS3_B"/>
    <property type="match status" value="1"/>
</dbReference>
<dbReference type="InterPro" id="IPR004087">
    <property type="entry name" value="KH_dom"/>
</dbReference>
<dbReference type="InterPro" id="IPR015946">
    <property type="entry name" value="KH_dom-like_a/b"/>
</dbReference>
<dbReference type="InterPro" id="IPR004044">
    <property type="entry name" value="KH_dom_type_2"/>
</dbReference>
<dbReference type="InterPro" id="IPR009019">
    <property type="entry name" value="KH_sf_prok-type"/>
</dbReference>
<dbReference type="InterPro" id="IPR036419">
    <property type="entry name" value="Ribosomal_S3_C_sf"/>
</dbReference>
<dbReference type="InterPro" id="IPR005704">
    <property type="entry name" value="Ribosomal_uS3_bac-typ"/>
</dbReference>
<dbReference type="InterPro" id="IPR001351">
    <property type="entry name" value="Ribosomal_uS3_C"/>
</dbReference>
<dbReference type="InterPro" id="IPR018280">
    <property type="entry name" value="Ribosomal_uS3_CS"/>
</dbReference>
<dbReference type="NCBIfam" id="TIGR01009">
    <property type="entry name" value="rpsC_bact"/>
    <property type="match status" value="1"/>
</dbReference>
<dbReference type="PANTHER" id="PTHR11760">
    <property type="entry name" value="30S/40S RIBOSOMAL PROTEIN S3"/>
    <property type="match status" value="1"/>
</dbReference>
<dbReference type="PANTHER" id="PTHR11760:SF19">
    <property type="entry name" value="SMALL RIBOSOMAL SUBUNIT PROTEIN US3C"/>
    <property type="match status" value="1"/>
</dbReference>
<dbReference type="Pfam" id="PF07650">
    <property type="entry name" value="KH_2"/>
    <property type="match status" value="1"/>
</dbReference>
<dbReference type="Pfam" id="PF00189">
    <property type="entry name" value="Ribosomal_S3_C"/>
    <property type="match status" value="1"/>
</dbReference>
<dbReference type="SMART" id="SM00322">
    <property type="entry name" value="KH"/>
    <property type="match status" value="1"/>
</dbReference>
<dbReference type="SUPFAM" id="SSF54814">
    <property type="entry name" value="Prokaryotic type KH domain (KH-domain type II)"/>
    <property type="match status" value="1"/>
</dbReference>
<dbReference type="SUPFAM" id="SSF54821">
    <property type="entry name" value="Ribosomal protein S3 C-terminal domain"/>
    <property type="match status" value="1"/>
</dbReference>
<dbReference type="PROSITE" id="PS50823">
    <property type="entry name" value="KH_TYPE_2"/>
    <property type="match status" value="1"/>
</dbReference>
<dbReference type="PROSITE" id="PS00548">
    <property type="entry name" value="RIBOSOMAL_S3"/>
    <property type="match status" value="1"/>
</dbReference>
<accession>Q18CG5</accession>
<proteinExistence type="inferred from homology"/>
<sequence>MGQKVNPHGLRVGVIKDWDSRWFATDKKEFGNLLLEDHNIRKFLKKRLYSAGVAKIEIERSANKIKMDLHVAKPGVVIGRAGAGIEALKAELEKMTKKTIIVNIVEVRSTDKNAQLVAENIALAIERRVAFRRAMKQAIQRAMKSGAKGIKVSASGRLGGAEMARTEGYSEGNVPLQTLRADIDYGFAEADTTYGKIGIKVWICNGEVLPTRDGVNPREESRKSDRRDNKRDNRRNDRRGNDRRGNDNRGNYRGQRPQGGSRPQRTENKGN</sequence>
<gene>
    <name evidence="1" type="primary">rpsC</name>
    <name type="ordered locus">CD630_00790</name>
</gene>
<comment type="function">
    <text evidence="1">Binds the lower part of the 30S subunit head. Binds mRNA in the 70S ribosome, positioning it for translation.</text>
</comment>
<comment type="subunit">
    <text evidence="1">Part of the 30S ribosomal subunit. Forms a tight complex with proteins S10 and S14.</text>
</comment>
<comment type="similarity">
    <text evidence="1">Belongs to the universal ribosomal protein uS3 family.</text>
</comment>
<evidence type="ECO:0000255" key="1">
    <source>
        <dbReference type="HAMAP-Rule" id="MF_01309"/>
    </source>
</evidence>
<evidence type="ECO:0000256" key="2">
    <source>
        <dbReference type="SAM" id="MobiDB-lite"/>
    </source>
</evidence>
<evidence type="ECO:0000305" key="3"/>